<evidence type="ECO:0000250" key="1">
    <source>
        <dbReference type="UniProtKB" id="P0DMD3"/>
    </source>
</evidence>
<evidence type="ECO:0000303" key="2">
    <source>
    </source>
</evidence>
<evidence type="ECO:0000305" key="3"/>
<evidence type="ECO:0000305" key="4">
    <source>
    </source>
</evidence>
<sequence length="105" mass="12465">MTVSCSKVLLSLCLFLILLEATHESNQQRTNYREFSEIQLAQETREINEKNNQLLNQQLPRLNRRKRLWRDEDRRTFCTTLCPCEDRRKRAAVTPPTRKVPCCCP</sequence>
<proteinExistence type="inferred from homology"/>
<comment type="subcellular location">
    <subcellularLocation>
        <location evidence="4">Secreted</location>
    </subcellularLocation>
</comment>
<comment type="tissue specificity">
    <text evidence="4">Expressed by the venom gland.</text>
</comment>
<comment type="PTM">
    <text evidence="1">Contains 3 disulfide bonds.</text>
</comment>
<comment type="similarity">
    <text evidence="3">Belongs to the scolopendra neurotoxin 10 family.</text>
</comment>
<feature type="signal peptide" evidence="1">
    <location>
        <begin position="1"/>
        <end position="21"/>
    </location>
</feature>
<feature type="chain" id="PRO_0000425497" description="Putative neurotoxin 10" evidence="1">
    <location>
        <begin position="22"/>
        <end position="105"/>
    </location>
</feature>
<reference key="1">
    <citation type="journal article" date="2012" name="Mol. Cell. Proteomics">
        <title>Chemical punch packed in venoms makes centipedes excellent predators.</title>
        <authorList>
            <person name="Yang S."/>
            <person name="Liu Z."/>
            <person name="Xiao Y."/>
            <person name="Li Y."/>
            <person name="Rong M."/>
            <person name="Liang S."/>
            <person name="Zhang Z."/>
            <person name="Yu H."/>
            <person name="King G.F."/>
            <person name="Lai R."/>
        </authorList>
    </citation>
    <scope>NUCLEOTIDE SEQUENCE [MRNA]</scope>
    <source>
        <tissue>Venom gland</tissue>
    </source>
</reference>
<protein>
    <recommendedName>
        <fullName evidence="2">Putative neurotoxin 10</fullName>
    </recommendedName>
</protein>
<name>PNXMA_SCOMU</name>
<keyword id="KW-1015">Disulfide bond</keyword>
<keyword id="KW-0528">Neurotoxin</keyword>
<keyword id="KW-0964">Secreted</keyword>
<keyword id="KW-0732">Signal</keyword>
<keyword id="KW-0800">Toxin</keyword>
<organism>
    <name type="scientific">Scolopendra mutilans</name>
    <name type="common">Chinese red-headed centipede</name>
    <name type="synonym">Scolopendra subspinipes mutilans</name>
    <dbReference type="NCBI Taxonomy" id="2836329"/>
    <lineage>
        <taxon>Eukaryota</taxon>
        <taxon>Metazoa</taxon>
        <taxon>Ecdysozoa</taxon>
        <taxon>Arthropoda</taxon>
        <taxon>Myriapoda</taxon>
        <taxon>Chilopoda</taxon>
        <taxon>Pleurostigmophora</taxon>
        <taxon>Scolopendromorpha</taxon>
        <taxon>Scolopendridae</taxon>
        <taxon>Scolopendra</taxon>
    </lineage>
</organism>
<dbReference type="SMR" id="P0DMD4"/>
<dbReference type="GO" id="GO:0005576">
    <property type="term" value="C:extracellular region"/>
    <property type="evidence" value="ECO:0007669"/>
    <property type="project" value="UniProtKB-SubCell"/>
</dbReference>
<dbReference type="GO" id="GO:0090729">
    <property type="term" value="F:toxin activity"/>
    <property type="evidence" value="ECO:0007669"/>
    <property type="project" value="UniProtKB-KW"/>
</dbReference>
<accession>P0DMD4</accession>